<dbReference type="EMBL" id="AE000782">
    <property type="protein sequence ID" value="AAB89915.1"/>
    <property type="molecule type" value="Genomic_DNA"/>
</dbReference>
<dbReference type="PIR" id="C69418">
    <property type="entry name" value="C69418"/>
</dbReference>
<dbReference type="RefSeq" id="WP_010878845.1">
    <property type="nucleotide sequence ID" value="NC_000917.1"/>
</dbReference>
<dbReference type="SMR" id="O28921"/>
<dbReference type="STRING" id="224325.AF_1348"/>
<dbReference type="PaxDb" id="224325-AF_1348"/>
<dbReference type="EnsemblBacteria" id="AAB89915">
    <property type="protein sequence ID" value="AAB89915"/>
    <property type="gene ID" value="AF_1348"/>
</dbReference>
<dbReference type="KEGG" id="afu:AF_1348"/>
<dbReference type="eggNOG" id="arCOG02104">
    <property type="taxonomic scope" value="Archaea"/>
</dbReference>
<dbReference type="HOGENOM" id="CLU_179014_0_0_2"/>
<dbReference type="OrthoDB" id="136135at2157"/>
<dbReference type="PhylomeDB" id="O28921"/>
<dbReference type="Proteomes" id="UP000002199">
    <property type="component" value="Chromosome"/>
</dbReference>
<dbReference type="Gene3D" id="1.10.10.10">
    <property type="entry name" value="Winged helix-like DNA-binding domain superfamily/Winged helix DNA-binding domain"/>
    <property type="match status" value="1"/>
</dbReference>
<dbReference type="InterPro" id="IPR036388">
    <property type="entry name" value="WH-like_DNA-bd_sf"/>
</dbReference>
<dbReference type="InterPro" id="IPR036390">
    <property type="entry name" value="WH_DNA-bd_sf"/>
</dbReference>
<dbReference type="SUPFAM" id="SSF46785">
    <property type="entry name" value="Winged helix' DNA-binding domain"/>
    <property type="match status" value="1"/>
</dbReference>
<organism>
    <name type="scientific">Archaeoglobus fulgidus (strain ATCC 49558 / DSM 4304 / JCM 9628 / NBRC 100126 / VC-16)</name>
    <dbReference type="NCBI Taxonomy" id="224325"/>
    <lineage>
        <taxon>Archaea</taxon>
        <taxon>Methanobacteriati</taxon>
        <taxon>Methanobacteriota</taxon>
        <taxon>Archaeoglobi</taxon>
        <taxon>Archaeoglobales</taxon>
        <taxon>Archaeoglobaceae</taxon>
        <taxon>Archaeoglobus</taxon>
    </lineage>
</organism>
<comment type="similarity">
    <text evidence="1">To A.fulgidus AF_0255 and AF_1363.</text>
</comment>
<name>Y1348_ARCFU</name>
<protein>
    <recommendedName>
        <fullName>Uncharacterized protein AF_1348</fullName>
    </recommendedName>
</protein>
<gene>
    <name type="ordered locus">AF_1348</name>
</gene>
<feature type="chain" id="PRO_0000127991" description="Uncharacterized protein AF_1348">
    <location>
        <begin position="1"/>
        <end position="85"/>
    </location>
</feature>
<reference key="1">
    <citation type="journal article" date="1997" name="Nature">
        <title>The complete genome sequence of the hyperthermophilic, sulphate-reducing archaeon Archaeoglobus fulgidus.</title>
        <authorList>
            <person name="Klenk H.-P."/>
            <person name="Clayton R.A."/>
            <person name="Tomb J.-F."/>
            <person name="White O."/>
            <person name="Nelson K.E."/>
            <person name="Ketchum K.A."/>
            <person name="Dodson R.J."/>
            <person name="Gwinn M.L."/>
            <person name="Hickey E.K."/>
            <person name="Peterson J.D."/>
            <person name="Richardson D.L."/>
            <person name="Kerlavage A.R."/>
            <person name="Graham D.E."/>
            <person name="Kyrpides N.C."/>
            <person name="Fleischmann R.D."/>
            <person name="Quackenbush J."/>
            <person name="Lee N.H."/>
            <person name="Sutton G.G."/>
            <person name="Gill S.R."/>
            <person name="Kirkness E.F."/>
            <person name="Dougherty B.A."/>
            <person name="McKenney K."/>
            <person name="Adams M.D."/>
            <person name="Loftus B.J."/>
            <person name="Peterson S.N."/>
            <person name="Reich C.I."/>
            <person name="McNeil L.K."/>
            <person name="Badger J.H."/>
            <person name="Glodek A."/>
            <person name="Zhou L."/>
            <person name="Overbeek R."/>
            <person name="Gocayne J.D."/>
            <person name="Weidman J.F."/>
            <person name="McDonald L.A."/>
            <person name="Utterback T.R."/>
            <person name="Cotton M.D."/>
            <person name="Spriggs T."/>
            <person name="Artiach P."/>
            <person name="Kaine B.P."/>
            <person name="Sykes S.M."/>
            <person name="Sadow P.W."/>
            <person name="D'Andrea K.P."/>
            <person name="Bowman C."/>
            <person name="Fujii C."/>
            <person name="Garland S.A."/>
            <person name="Mason T.M."/>
            <person name="Olsen G.J."/>
            <person name="Fraser C.M."/>
            <person name="Smith H.O."/>
            <person name="Woese C.R."/>
            <person name="Venter J.C."/>
        </authorList>
    </citation>
    <scope>NUCLEOTIDE SEQUENCE [LARGE SCALE GENOMIC DNA]</scope>
    <source>
        <strain>ATCC 49558 / DSM 4304 / JCM 9628 / NBRC 100126 / VC-16</strain>
    </source>
</reference>
<proteinExistence type="predicted"/>
<keyword id="KW-1185">Reference proteome</keyword>
<accession>O28921</accession>
<sequence length="85" mass="9826">MAERERDREQHERLFKAASNPLRKKMAEKIGNRGITREELKKELGDVSDFEFKFNLDYLIAEGFVVEKDGKLYLTEDGVDLAYGG</sequence>
<evidence type="ECO:0000305" key="1"/>